<dbReference type="EMBL" id="AF303741">
    <property type="protein sequence ID" value="AAK82078.1"/>
    <property type="molecule type" value="Genomic_DNA"/>
</dbReference>
<dbReference type="RefSeq" id="NP_149679.1">
    <property type="nucleotide sequence ID" value="NC_003038.1"/>
</dbReference>
<dbReference type="SMR" id="Q91FV5"/>
<dbReference type="KEGG" id="vg:1733265"/>
<dbReference type="OrthoDB" id="37723at10239"/>
<dbReference type="Proteomes" id="UP000001359">
    <property type="component" value="Genome"/>
</dbReference>
<organism>
    <name type="scientific">Invertebrate iridescent virus 6</name>
    <name type="common">IIV-6</name>
    <name type="synonym">Chilo iridescent virus</name>
    <dbReference type="NCBI Taxonomy" id="176652"/>
    <lineage>
        <taxon>Viruses</taxon>
        <taxon>Varidnaviria</taxon>
        <taxon>Bamfordvirae</taxon>
        <taxon>Nucleocytoviricota</taxon>
        <taxon>Megaviricetes</taxon>
        <taxon>Pimascovirales</taxon>
        <taxon>Iridoviridae</taxon>
        <taxon>Betairidovirinae</taxon>
        <taxon>Iridovirus</taxon>
    </lineage>
</organism>
<sequence length="160" mass="18331">MKVTLLLLLIAVLLLLLIFMKVCKQKCIEGIEFEIKNNVKKSLDKKIKDKKSVSKIVDKYTTGLQNCYNVKNVSFDQFIDPESTNNLELKKCVGSLINVGVMKYWSDNLESKTIDNLNETMECMTKLPLNSNTTTRFPLRAAECAGERSWWKPDIFGTRN</sequence>
<protein>
    <recommendedName>
        <fullName>Uncharacterized protein 216R</fullName>
    </recommendedName>
</protein>
<proteinExistence type="inferred from homology"/>
<gene>
    <name type="ORF">IIV6-216R</name>
</gene>
<keyword id="KW-1185">Reference proteome</keyword>
<keyword id="KW-0732">Signal</keyword>
<name>216R_IIV6</name>
<feature type="signal peptide" evidence="1">
    <location>
        <begin position="1"/>
        <end position="25"/>
    </location>
</feature>
<feature type="chain" id="PRO_0000378028" description="Uncharacterized protein 216R">
    <location>
        <begin position="26"/>
        <end position="160"/>
    </location>
</feature>
<accession>Q91FV5</accession>
<evidence type="ECO:0000255" key="1"/>
<organismHost>
    <name type="scientific">Acheta domesticus</name>
    <name type="common">House cricket</name>
    <dbReference type="NCBI Taxonomy" id="6997"/>
</organismHost>
<organismHost>
    <name type="scientific">Chilo suppressalis</name>
    <name type="common">Asiatic rice borer moth</name>
    <dbReference type="NCBI Taxonomy" id="168631"/>
</organismHost>
<organismHost>
    <name type="scientific">Gryllus bimaculatus</name>
    <name type="common">Two-spotted cricket</name>
    <dbReference type="NCBI Taxonomy" id="6999"/>
</organismHost>
<organismHost>
    <name type="scientific">Gryllus campestris</name>
    <dbReference type="NCBI Taxonomy" id="58607"/>
</organismHost>
<organismHost>
    <name type="scientific">Spodoptera frugiperda</name>
    <name type="common">Fall armyworm</name>
    <dbReference type="NCBI Taxonomy" id="7108"/>
</organismHost>
<reference key="1">
    <citation type="journal article" date="2001" name="Virology">
        <title>Analysis of the first complete DNA sequence of an invertebrate iridovirus: coding strategy of the genome of Chilo iridescent virus.</title>
        <authorList>
            <person name="Jakob N.J."/>
            <person name="Mueller K."/>
            <person name="Bahr U."/>
            <person name="Darai G."/>
        </authorList>
    </citation>
    <scope>NUCLEOTIDE SEQUENCE [LARGE SCALE GENOMIC DNA]</scope>
</reference>
<reference key="2">
    <citation type="journal article" date="2007" name="Virol. J.">
        <title>Comparative genomic analysis of the family Iridoviridae: re-annotating and defining the core set of iridovirus genes.</title>
        <authorList>
            <person name="Eaton H.E."/>
            <person name="Metcalf J."/>
            <person name="Penny E."/>
            <person name="Tcherepanov V."/>
            <person name="Upton C."/>
            <person name="Brunetti C.R."/>
        </authorList>
    </citation>
    <scope>GENOME REANNOTATION</scope>
</reference>